<evidence type="ECO:0000255" key="1">
    <source>
        <dbReference type="HAMAP-Rule" id="MF_00388"/>
    </source>
</evidence>
<dbReference type="EC" id="3.5.1.108" evidence="1"/>
<dbReference type="EMBL" id="CP001111">
    <property type="protein sequence ID" value="ACF50313.1"/>
    <property type="molecule type" value="Genomic_DNA"/>
</dbReference>
<dbReference type="RefSeq" id="WP_004143722.1">
    <property type="nucleotide sequence ID" value="NC_011071.1"/>
</dbReference>
<dbReference type="SMR" id="B4SJY1"/>
<dbReference type="STRING" id="391008.Smal_0608"/>
<dbReference type="KEGG" id="smt:Smal_0608"/>
<dbReference type="eggNOG" id="COG0774">
    <property type="taxonomic scope" value="Bacteria"/>
</dbReference>
<dbReference type="HOGENOM" id="CLU_046528_1_0_6"/>
<dbReference type="OrthoDB" id="9802746at2"/>
<dbReference type="UniPathway" id="UPA00359">
    <property type="reaction ID" value="UER00478"/>
</dbReference>
<dbReference type="Proteomes" id="UP000001867">
    <property type="component" value="Chromosome"/>
</dbReference>
<dbReference type="GO" id="GO:0016020">
    <property type="term" value="C:membrane"/>
    <property type="evidence" value="ECO:0007669"/>
    <property type="project" value="GOC"/>
</dbReference>
<dbReference type="GO" id="GO:0046872">
    <property type="term" value="F:metal ion binding"/>
    <property type="evidence" value="ECO:0007669"/>
    <property type="project" value="UniProtKB-KW"/>
</dbReference>
<dbReference type="GO" id="GO:0103117">
    <property type="term" value="F:UDP-3-O-acyl-N-acetylglucosamine deacetylase activity"/>
    <property type="evidence" value="ECO:0007669"/>
    <property type="project" value="UniProtKB-UniRule"/>
</dbReference>
<dbReference type="GO" id="GO:0009245">
    <property type="term" value="P:lipid A biosynthetic process"/>
    <property type="evidence" value="ECO:0007669"/>
    <property type="project" value="UniProtKB-UniRule"/>
</dbReference>
<dbReference type="Gene3D" id="3.30.230.20">
    <property type="entry name" value="lpxc deacetylase, domain 1"/>
    <property type="match status" value="1"/>
</dbReference>
<dbReference type="Gene3D" id="3.30.1700.10">
    <property type="entry name" value="lpxc deacetylase, domain 2"/>
    <property type="match status" value="1"/>
</dbReference>
<dbReference type="HAMAP" id="MF_00388">
    <property type="entry name" value="LpxC"/>
    <property type="match status" value="1"/>
</dbReference>
<dbReference type="InterPro" id="IPR020568">
    <property type="entry name" value="Ribosomal_Su5_D2-typ_SF"/>
</dbReference>
<dbReference type="InterPro" id="IPR004463">
    <property type="entry name" value="UDP-acyl_GlcNac_deAcase"/>
</dbReference>
<dbReference type="InterPro" id="IPR011334">
    <property type="entry name" value="UDP-acyl_GlcNac_deAcase_C"/>
</dbReference>
<dbReference type="InterPro" id="IPR015870">
    <property type="entry name" value="UDP-acyl_N-AcGlcN_deAcase_N"/>
</dbReference>
<dbReference type="NCBIfam" id="TIGR00325">
    <property type="entry name" value="lpxC"/>
    <property type="match status" value="1"/>
</dbReference>
<dbReference type="PANTHER" id="PTHR33694">
    <property type="entry name" value="UDP-3-O-ACYL-N-ACETYLGLUCOSAMINE DEACETYLASE 1, MITOCHONDRIAL-RELATED"/>
    <property type="match status" value="1"/>
</dbReference>
<dbReference type="PANTHER" id="PTHR33694:SF1">
    <property type="entry name" value="UDP-3-O-ACYL-N-ACETYLGLUCOSAMINE DEACETYLASE 1, MITOCHONDRIAL-RELATED"/>
    <property type="match status" value="1"/>
</dbReference>
<dbReference type="Pfam" id="PF03331">
    <property type="entry name" value="LpxC"/>
    <property type="match status" value="1"/>
</dbReference>
<dbReference type="SUPFAM" id="SSF54211">
    <property type="entry name" value="Ribosomal protein S5 domain 2-like"/>
    <property type="match status" value="2"/>
</dbReference>
<gene>
    <name evidence="1" type="primary">lpxC</name>
    <name type="ordered locus">Smal_0608</name>
</gene>
<sequence length="303" mass="33474">MIQQRTLKNTIRATGVGLHSGDKVYMTLRPAPVNHGIVFRRVDLDPVVEVPAKAELVTEVTLCTGLTCNDAKIQTVEHLMSALAGLGVDNIIVELSSAELPIMDGSAGPFVFLLQSAGIVEQDAPKRFIRVLKTVEVTEGDKVARFTPYEGYKLGFTIQFDHPMIPAKQSRQEIEFSTLAYTKEISRARTFGFMRDLEYMRERNLGLGGSMDNAIVLDEFRVLNEDGLRYADEFVRHKILDAIGDLYLAGGQVLGAYEGFKSGHALNNKLVRALMADATAWEWVSFDSPATPDPVEYATPAYA</sequence>
<organism>
    <name type="scientific">Stenotrophomonas maltophilia (strain R551-3)</name>
    <dbReference type="NCBI Taxonomy" id="391008"/>
    <lineage>
        <taxon>Bacteria</taxon>
        <taxon>Pseudomonadati</taxon>
        <taxon>Pseudomonadota</taxon>
        <taxon>Gammaproteobacteria</taxon>
        <taxon>Lysobacterales</taxon>
        <taxon>Lysobacteraceae</taxon>
        <taxon>Stenotrophomonas</taxon>
        <taxon>Stenotrophomonas maltophilia group</taxon>
    </lineage>
</organism>
<keyword id="KW-0378">Hydrolase</keyword>
<keyword id="KW-0441">Lipid A biosynthesis</keyword>
<keyword id="KW-0444">Lipid biosynthesis</keyword>
<keyword id="KW-0443">Lipid metabolism</keyword>
<keyword id="KW-0479">Metal-binding</keyword>
<keyword id="KW-0862">Zinc</keyword>
<reference key="1">
    <citation type="submission" date="2008-06" db="EMBL/GenBank/DDBJ databases">
        <title>Complete sequence of Stenotrophomonas maltophilia R551-3.</title>
        <authorList>
            <consortium name="US DOE Joint Genome Institute"/>
            <person name="Lucas S."/>
            <person name="Copeland A."/>
            <person name="Lapidus A."/>
            <person name="Glavina del Rio T."/>
            <person name="Dalin E."/>
            <person name="Tice H."/>
            <person name="Pitluck S."/>
            <person name="Chain P."/>
            <person name="Malfatti S."/>
            <person name="Shin M."/>
            <person name="Vergez L."/>
            <person name="Lang D."/>
            <person name="Schmutz J."/>
            <person name="Larimer F."/>
            <person name="Land M."/>
            <person name="Hauser L."/>
            <person name="Kyrpides N."/>
            <person name="Mikhailova N."/>
            <person name="Taghavi S."/>
            <person name="Monchy S."/>
            <person name="Newman L."/>
            <person name="Vangronsveld J."/>
            <person name="van der Lelie D."/>
            <person name="Richardson P."/>
        </authorList>
    </citation>
    <scope>NUCLEOTIDE SEQUENCE [LARGE SCALE GENOMIC DNA]</scope>
    <source>
        <strain>R551-3</strain>
    </source>
</reference>
<accession>B4SJY1</accession>
<comment type="function">
    <text evidence="1">Catalyzes the hydrolysis of UDP-3-O-myristoyl-N-acetylglucosamine to form UDP-3-O-myristoylglucosamine and acetate, the committed step in lipid A biosynthesis.</text>
</comment>
<comment type="catalytic activity">
    <reaction evidence="1">
        <text>a UDP-3-O-[(3R)-3-hydroxyacyl]-N-acetyl-alpha-D-glucosamine + H2O = a UDP-3-O-[(3R)-3-hydroxyacyl]-alpha-D-glucosamine + acetate</text>
        <dbReference type="Rhea" id="RHEA:67816"/>
        <dbReference type="ChEBI" id="CHEBI:15377"/>
        <dbReference type="ChEBI" id="CHEBI:30089"/>
        <dbReference type="ChEBI" id="CHEBI:137740"/>
        <dbReference type="ChEBI" id="CHEBI:173225"/>
        <dbReference type="EC" id="3.5.1.108"/>
    </reaction>
</comment>
<comment type="cofactor">
    <cofactor evidence="1">
        <name>Zn(2+)</name>
        <dbReference type="ChEBI" id="CHEBI:29105"/>
    </cofactor>
</comment>
<comment type="pathway">
    <text evidence="1">Glycolipid biosynthesis; lipid IV(A) biosynthesis; lipid IV(A) from (3R)-3-hydroxytetradecanoyl-[acyl-carrier-protein] and UDP-N-acetyl-alpha-D-glucosamine: step 2/6.</text>
</comment>
<comment type="similarity">
    <text evidence="1">Belongs to the LpxC family.</text>
</comment>
<name>LPXC_STRM5</name>
<feature type="chain" id="PRO_1000122825" description="UDP-3-O-acyl-N-acetylglucosamine deacetylase">
    <location>
        <begin position="1"/>
        <end position="303"/>
    </location>
</feature>
<feature type="active site" description="Proton donor" evidence="1">
    <location>
        <position position="264"/>
    </location>
</feature>
<feature type="binding site" evidence="1">
    <location>
        <position position="78"/>
    </location>
    <ligand>
        <name>Zn(2+)</name>
        <dbReference type="ChEBI" id="CHEBI:29105"/>
    </ligand>
</feature>
<feature type="binding site" evidence="1">
    <location>
        <position position="237"/>
    </location>
    <ligand>
        <name>Zn(2+)</name>
        <dbReference type="ChEBI" id="CHEBI:29105"/>
    </ligand>
</feature>
<feature type="binding site" evidence="1">
    <location>
        <position position="241"/>
    </location>
    <ligand>
        <name>Zn(2+)</name>
        <dbReference type="ChEBI" id="CHEBI:29105"/>
    </ligand>
</feature>
<proteinExistence type="inferred from homology"/>
<protein>
    <recommendedName>
        <fullName evidence="1">UDP-3-O-acyl-N-acetylglucosamine deacetylase</fullName>
        <shortName evidence="1">UDP-3-O-acyl-GlcNAc deacetylase</shortName>
        <ecNumber evidence="1">3.5.1.108</ecNumber>
    </recommendedName>
    <alternativeName>
        <fullName evidence="1">UDP-3-O-[R-3-hydroxymyristoyl]-N-acetylglucosamine deacetylase</fullName>
    </alternativeName>
</protein>